<proteinExistence type="evidence at protein level"/>
<evidence type="ECO:0000250" key="1">
    <source>
        <dbReference type="UniProtKB" id="Q66HG4"/>
    </source>
</evidence>
<evidence type="ECO:0000269" key="2">
    <source>
    </source>
</evidence>
<evidence type="ECO:0000269" key="3">
    <source>
    </source>
</evidence>
<evidence type="ECO:0000269" key="4">
    <source>
    </source>
</evidence>
<evidence type="ECO:0000303" key="5">
    <source>
    </source>
</evidence>
<evidence type="ECO:0000303" key="6">
    <source>
    </source>
</evidence>
<evidence type="ECO:0000305" key="7"/>
<evidence type="ECO:0000305" key="8">
    <source>
    </source>
</evidence>
<evidence type="ECO:0000305" key="9">
    <source>
    </source>
</evidence>
<evidence type="ECO:0000312" key="10">
    <source>
        <dbReference type="HGNC" id="HGNC:24063"/>
    </source>
</evidence>
<evidence type="ECO:0007744" key="11">
    <source>
        <dbReference type="PDB" id="1SNZ"/>
    </source>
</evidence>
<evidence type="ECO:0007744" key="12">
    <source>
        <dbReference type="PDB" id="1SO0"/>
    </source>
</evidence>
<evidence type="ECO:0007744" key="13">
    <source>
    </source>
</evidence>
<evidence type="ECO:0007744" key="14">
    <source>
    </source>
</evidence>
<evidence type="ECO:0007829" key="15">
    <source>
        <dbReference type="PDB" id="1SNZ"/>
    </source>
</evidence>
<evidence type="ECO:0007829" key="16">
    <source>
        <dbReference type="PDB" id="1SO0"/>
    </source>
</evidence>
<accession>Q96C23</accession>
<accession>Q53RY1</accession>
<accession>Q8NIA2</accession>
<accession>V9HWA8</accession>
<feature type="initiator methionine" description="Removed" evidence="13">
    <location>
        <position position="1"/>
    </location>
</feature>
<feature type="chain" id="PRO_0000197433" description="Galactose mutarotase">
    <location>
        <begin position="2"/>
        <end position="342"/>
    </location>
</feature>
<feature type="active site" description="Proton donor" evidence="9">
    <location>
        <position position="176"/>
    </location>
</feature>
<feature type="active site" description="Proton acceptor" evidence="9">
    <location>
        <position position="307"/>
    </location>
</feature>
<feature type="binding site" evidence="3 12">
    <location>
        <begin position="81"/>
        <end position="82"/>
    </location>
    <ligand>
        <name>beta-D-galactose</name>
        <dbReference type="ChEBI" id="CHEBI:27667"/>
    </ligand>
</feature>
<feature type="binding site" evidence="3 12">
    <location>
        <position position="107"/>
    </location>
    <ligand>
        <name>beta-D-galactose</name>
        <dbReference type="ChEBI" id="CHEBI:27667"/>
    </ligand>
</feature>
<feature type="binding site" evidence="3 12">
    <location>
        <begin position="176"/>
        <end position="178"/>
    </location>
    <ligand>
        <name>beta-D-galactose</name>
        <dbReference type="ChEBI" id="CHEBI:27667"/>
    </ligand>
</feature>
<feature type="binding site" evidence="3 12">
    <location>
        <position position="243"/>
    </location>
    <ligand>
        <name>beta-D-galactose</name>
        <dbReference type="ChEBI" id="CHEBI:27667"/>
    </ligand>
</feature>
<feature type="binding site" evidence="3 12">
    <location>
        <position position="279"/>
    </location>
    <ligand>
        <name>beta-D-galactose</name>
        <dbReference type="ChEBI" id="CHEBI:27667"/>
    </ligand>
</feature>
<feature type="binding site" evidence="3 12">
    <location>
        <position position="307"/>
    </location>
    <ligand>
        <name>beta-D-galactose</name>
        <dbReference type="ChEBI" id="CHEBI:27667"/>
    </ligand>
</feature>
<feature type="modified residue" description="N-acetylalanine" evidence="13">
    <location>
        <position position="2"/>
    </location>
</feature>
<feature type="modified residue" description="Phosphoserine" evidence="14">
    <location>
        <position position="14"/>
    </location>
</feature>
<feature type="modified residue" description="Phosphoserine" evidence="1">
    <location>
        <position position="124"/>
    </location>
</feature>
<feature type="sequence variant" id="VAR_083547" description="In GALAC4; loss of protein accumulation." evidence="4">
    <location>
        <begin position="82"/>
        <end position="342"/>
    </location>
</feature>
<feature type="sequence variant" id="VAR_083548" description="In GALAC4; uncertain significance; decreased protein stability; dbSNP:rs114440198." evidence="4">
    <original>G</original>
    <variation>R</variation>
    <location>
        <position position="142"/>
    </location>
</feature>
<feature type="sequence variant" id="VAR_024451" description="In dbSNP:rs6741892.">
    <original>N</original>
    <variation>Y</variation>
    <location>
        <position position="190"/>
    </location>
</feature>
<feature type="sequence variant" id="VAR_083549" description="In GALAC4; decreased protein stability; dbSNP:rs1229797646." evidence="4">
    <original>R</original>
    <variation>G</variation>
    <location>
        <position position="267"/>
    </location>
</feature>
<feature type="sequence variant" id="VAR_083550" description="In GALAC4; decreased protein stability." evidence="4">
    <location>
        <begin position="311"/>
        <end position="342"/>
    </location>
</feature>
<feature type="mutagenesis site" description="Decreased activity by 5-fold." evidence="2">
    <original>H</original>
    <variation>A</variation>
    <location>
        <position position="107"/>
    </location>
</feature>
<feature type="mutagenesis site" description="Decreased activity by 300-fold." evidence="2">
    <original>H</original>
    <variation>A</variation>
    <location>
        <position position="176"/>
    </location>
</feature>
<feature type="mutagenesis site" description="Loss of activity." evidence="2">
    <original>E</original>
    <variation>A</variation>
    <location>
        <position position="307"/>
    </location>
</feature>
<feature type="strand" evidence="15">
    <location>
        <begin position="3"/>
        <end position="12"/>
    </location>
</feature>
<feature type="turn" evidence="15">
    <location>
        <begin position="13"/>
        <end position="16"/>
    </location>
</feature>
<feature type="strand" evidence="15">
    <location>
        <begin position="17"/>
        <end position="25"/>
    </location>
</feature>
<feature type="strand" evidence="15">
    <location>
        <begin position="30"/>
        <end position="34"/>
    </location>
</feature>
<feature type="strand" evidence="15">
    <location>
        <begin position="39"/>
        <end position="46"/>
    </location>
</feature>
<feature type="strand" evidence="15">
    <location>
        <begin position="52"/>
        <end position="54"/>
    </location>
</feature>
<feature type="helix" evidence="15">
    <location>
        <begin position="62"/>
        <end position="66"/>
    </location>
</feature>
<feature type="strand" evidence="15">
    <location>
        <begin position="81"/>
        <end position="83"/>
    </location>
</feature>
<feature type="helix" evidence="15">
    <location>
        <begin position="84"/>
        <end position="86"/>
    </location>
</feature>
<feature type="strand" evidence="15">
    <location>
        <begin position="87"/>
        <end position="90"/>
    </location>
</feature>
<feature type="strand" evidence="15">
    <location>
        <begin position="93"/>
        <end position="96"/>
    </location>
</feature>
<feature type="strand" evidence="15">
    <location>
        <begin position="104"/>
        <end position="106"/>
    </location>
</feature>
<feature type="strand" evidence="15">
    <location>
        <begin position="109"/>
        <end position="111"/>
    </location>
</feature>
<feature type="helix" evidence="15">
    <location>
        <begin position="113"/>
        <end position="115"/>
    </location>
</feature>
<feature type="strand" evidence="15">
    <location>
        <begin position="119"/>
        <end position="123"/>
    </location>
</feature>
<feature type="strand" evidence="15">
    <location>
        <begin position="126"/>
        <end position="133"/>
    </location>
</feature>
<feature type="helix" evidence="15">
    <location>
        <begin position="137"/>
        <end position="139"/>
    </location>
</feature>
<feature type="strand" evidence="15">
    <location>
        <begin position="144"/>
        <end position="153"/>
    </location>
</feature>
<feature type="strand" evidence="15">
    <location>
        <begin position="156"/>
        <end position="167"/>
    </location>
</feature>
<feature type="strand" evidence="15">
    <location>
        <begin position="193"/>
        <end position="196"/>
    </location>
</feature>
<feature type="strand" evidence="15">
    <location>
        <begin position="198"/>
        <end position="201"/>
    </location>
</feature>
<feature type="helix" evidence="15">
    <location>
        <begin position="230"/>
        <end position="236"/>
    </location>
</feature>
<feature type="strand" evidence="15">
    <location>
        <begin position="243"/>
        <end position="248"/>
    </location>
</feature>
<feature type="strand" evidence="16">
    <location>
        <begin position="251"/>
        <end position="253"/>
    </location>
</feature>
<feature type="strand" evidence="15">
    <location>
        <begin position="255"/>
        <end position="261"/>
    </location>
</feature>
<feature type="turn" evidence="15">
    <location>
        <begin position="263"/>
        <end position="265"/>
    </location>
</feature>
<feature type="strand" evidence="15">
    <location>
        <begin position="267"/>
        <end position="281"/>
    </location>
</feature>
<feature type="strand" evidence="15">
    <location>
        <begin position="287"/>
        <end position="291"/>
    </location>
</feature>
<feature type="helix" evidence="15">
    <location>
        <begin position="293"/>
        <end position="295"/>
    </location>
</feature>
<feature type="strand" evidence="15">
    <location>
        <begin position="297"/>
        <end position="299"/>
    </location>
</feature>
<feature type="strand" evidence="15">
    <location>
        <begin position="304"/>
        <end position="310"/>
    </location>
</feature>
<feature type="helix" evidence="15">
    <location>
        <begin position="314"/>
        <end position="316"/>
    </location>
</feature>
<feature type="strand" evidence="15">
    <location>
        <begin position="331"/>
        <end position="341"/>
    </location>
</feature>
<comment type="function">
    <text evidence="2 4">Mutarotase that catalyzes the interconversion of beta-D-galactose and alpha-D-galactose during galactose metabolism (PubMed:12753898). Beta-D-galactose is metabolized in the liver into glucose 1-phosphate, the primary metabolic fuel, by the action of four enzymes that constitute the Leloir pathway: GALM, GALK1 (galactokinase), GALT (galactose-1-phosphate uridylyltransferase) and GALE (UDP-galactose-4'-epimerase) (PubMed:30451973). Involved in the maintenance of the equilibrium between the beta- and alpha-anomers of galactose, therefore ensuring a sufficient supply of the alpha-anomer for GALK1 (PubMed:12753898). Also active on D-glucose although shows a preference for galactose over glucose (PubMed:12753898).</text>
</comment>
<comment type="catalytic activity">
    <reaction evidence="2">
        <text>alpha-D-galactose = beta-D-galactose</text>
        <dbReference type="Rhea" id="RHEA:28675"/>
        <dbReference type="ChEBI" id="CHEBI:27667"/>
        <dbReference type="ChEBI" id="CHEBI:28061"/>
        <dbReference type="EC" id="5.1.3.3"/>
    </reaction>
    <physiologicalReaction direction="right-to-left" evidence="8">
        <dbReference type="Rhea" id="RHEA:28677"/>
    </physiologicalReaction>
</comment>
<comment type="catalytic activity">
    <reaction evidence="2">
        <text>alpha-D-glucose = beta-D-glucose</text>
        <dbReference type="Rhea" id="RHEA:10264"/>
        <dbReference type="ChEBI" id="CHEBI:15903"/>
        <dbReference type="ChEBI" id="CHEBI:17925"/>
        <dbReference type="EC" id="5.1.3.3"/>
    </reaction>
</comment>
<comment type="biophysicochemical properties">
    <kinetics>
        <KM evidence="2">37 mM for galactose (at 20 degrees Celsius)</KM>
        <KM evidence="2">54 mM for glucose (at 20 degrees Celsius)</KM>
        <text evidence="2">kcat is 12000 sec(-1) with galactose as substrate (PubMed:12753898). kcat is 4900 sec(-1) with glucose as substrate (PubMed:12753898).</text>
    </kinetics>
</comment>
<comment type="pathway">
    <text evidence="8">Carbohydrate metabolism; hexose metabolism.</text>
</comment>
<comment type="pathway">
    <text evidence="8">Carbohydrate metabolism; galactose metabolism.</text>
</comment>
<comment type="subunit">
    <text evidence="2 3">Monomer.</text>
</comment>
<comment type="subcellular location">
    <subcellularLocation>
        <location evidence="7">Cytoplasm</location>
    </subcellularLocation>
</comment>
<comment type="disease" evidence="4">
    <disease id="DI-05839">
        <name>Galactosemia 4</name>
        <acronym>GALAC4</acronym>
        <description>A form of galactosemia, an inborn error of galactose metabolism typically manifesting in the neonatal period, after ingestion of galactose, with jaundice, hepatosplenomegaly, hepatocellular insufficiency, food intolerance, hypoglycemia, renal tubular dysfunction, muscle hypotonia, sepsis and cataract. GALAC4 inheritance is autosomal recessive.</description>
        <dbReference type="MIM" id="618881"/>
    </disease>
    <text>The disease is caused by variants affecting the gene represented in this entry.</text>
</comment>
<comment type="similarity">
    <text evidence="7">Belongs to the aldose epimerase family.</text>
</comment>
<comment type="sequence caution" evidence="7">
    <conflict type="erroneous gene model prediction">
        <sequence resource="EMBL-CDS" id="AAL62475"/>
    </conflict>
</comment>
<keyword id="KW-0002">3D-structure</keyword>
<keyword id="KW-0007">Acetylation</keyword>
<keyword id="KW-0119">Carbohydrate metabolism</keyword>
<keyword id="KW-0963">Cytoplasm</keyword>
<keyword id="KW-0225">Disease variant</keyword>
<keyword id="KW-0413">Isomerase</keyword>
<keyword id="KW-0597">Phosphoprotein</keyword>
<keyword id="KW-1267">Proteomics identification</keyword>
<keyword id="KW-1185">Reference proteome</keyword>
<name>GALM_HUMAN</name>
<sequence length="342" mass="37766">MASVTRAVFGELPSGGGTVEKFQLQSDLLRVDIISWGCTITALEVKDRQGRASDVVLGFAELEGYLQKQPYFGAVIGRVANRIAKGTFKVDGKEYHLAINKEPNSLHGGVRGFDKVLWTPRVLSNGVQFSRISPDGEEGYPGELKVWVTYTLDGGELIVNYRAQASQATPVNLTNHSYFNLAGQASPNINDHEVTIEADTYLPVDETLIPTGEVAPVQGTAFDLRKPVELGKHLQDFHLNGFDHNFCLKGSKEKHFCARVHHAASGRVLEVYTTQPGVQFYTGNFLDGTLKGKNGAVYPKHSGFCLETQNWPDAVNQPRFPPVLLRPGEEYDHTTWFKFSVA</sequence>
<dbReference type="EC" id="5.1.3.3" evidence="2"/>
<dbReference type="EMBL" id="AY064382">
    <property type="protein sequence ID" value="AAL62475.1"/>
    <property type="status" value="ALT_SEQ"/>
    <property type="molecule type" value="Genomic_DNA"/>
</dbReference>
<dbReference type="EMBL" id="AY064381">
    <property type="protein sequence ID" value="AAL62475.1"/>
    <property type="status" value="JOINED"/>
    <property type="molecule type" value="Genomic_DNA"/>
</dbReference>
<dbReference type="EMBL" id="AY064379">
    <property type="protein sequence ID" value="AAL62475.1"/>
    <property type="status" value="JOINED"/>
    <property type="molecule type" value="Genomic_DNA"/>
</dbReference>
<dbReference type="EMBL" id="AY064380">
    <property type="protein sequence ID" value="AAL62475.1"/>
    <property type="status" value="JOINED"/>
    <property type="molecule type" value="Genomic_DNA"/>
</dbReference>
<dbReference type="EMBL" id="AY064378">
    <property type="protein sequence ID" value="AAL62475.1"/>
    <property type="status" value="JOINED"/>
    <property type="molecule type" value="Genomic_DNA"/>
</dbReference>
<dbReference type="EMBL" id="AY064385">
    <property type="protein sequence ID" value="AAL62476.1"/>
    <property type="molecule type" value="Genomic_DNA"/>
</dbReference>
<dbReference type="EMBL" id="AY064378">
    <property type="protein sequence ID" value="AAL62476.1"/>
    <property type="status" value="JOINED"/>
    <property type="molecule type" value="Genomic_DNA"/>
</dbReference>
<dbReference type="EMBL" id="AY064380">
    <property type="protein sequence ID" value="AAL62476.1"/>
    <property type="status" value="JOINED"/>
    <property type="molecule type" value="Genomic_DNA"/>
</dbReference>
<dbReference type="EMBL" id="AY064379">
    <property type="protein sequence ID" value="AAL62476.1"/>
    <property type="status" value="JOINED"/>
    <property type="molecule type" value="Genomic_DNA"/>
</dbReference>
<dbReference type="EMBL" id="AY064381">
    <property type="protein sequence ID" value="AAL62476.1"/>
    <property type="status" value="JOINED"/>
    <property type="molecule type" value="Genomic_DNA"/>
</dbReference>
<dbReference type="EMBL" id="AY064384">
    <property type="protein sequence ID" value="AAL62476.1"/>
    <property type="status" value="JOINED"/>
    <property type="molecule type" value="Genomic_DNA"/>
</dbReference>
<dbReference type="EMBL" id="AY064383">
    <property type="protein sequence ID" value="AAL62476.1"/>
    <property type="status" value="JOINED"/>
    <property type="molecule type" value="Genomic_DNA"/>
</dbReference>
<dbReference type="EMBL" id="EU794611">
    <property type="protein sequence ID" value="ACJ13665.1"/>
    <property type="molecule type" value="mRNA"/>
</dbReference>
<dbReference type="EMBL" id="AK291489">
    <property type="protein sequence ID" value="BAF84178.1"/>
    <property type="molecule type" value="mRNA"/>
</dbReference>
<dbReference type="EMBL" id="AC074366">
    <property type="protein sequence ID" value="AAX93101.1"/>
    <property type="molecule type" value="Genomic_DNA"/>
</dbReference>
<dbReference type="EMBL" id="CH471053">
    <property type="protein sequence ID" value="EAX00367.1"/>
    <property type="molecule type" value="Genomic_DNA"/>
</dbReference>
<dbReference type="EMBL" id="BC014916">
    <property type="protein sequence ID" value="AAH14916.1"/>
    <property type="molecule type" value="mRNA"/>
</dbReference>
<dbReference type="EMBL" id="BC019263">
    <property type="protein sequence ID" value="AAH19263.1"/>
    <property type="molecule type" value="mRNA"/>
</dbReference>
<dbReference type="CCDS" id="CCDS1797.1"/>
<dbReference type="RefSeq" id="NP_620156.1">
    <property type="nucleotide sequence ID" value="NM_138801.3"/>
</dbReference>
<dbReference type="RefSeq" id="XP_011530842.1">
    <property type="nucleotide sequence ID" value="XM_011532540.1"/>
</dbReference>
<dbReference type="PDB" id="1SNZ">
    <property type="method" value="X-ray"/>
    <property type="resolution" value="2.20 A"/>
    <property type="chains" value="A/B=1-342"/>
</dbReference>
<dbReference type="PDB" id="1SO0">
    <property type="method" value="X-ray"/>
    <property type="resolution" value="2.30 A"/>
    <property type="chains" value="A/B/C/D=1-342"/>
</dbReference>
<dbReference type="PDBsum" id="1SNZ"/>
<dbReference type="PDBsum" id="1SO0"/>
<dbReference type="SMR" id="Q96C23"/>
<dbReference type="BioGRID" id="126244">
    <property type="interactions" value="24"/>
</dbReference>
<dbReference type="FunCoup" id="Q96C23">
    <property type="interactions" value="235"/>
</dbReference>
<dbReference type="IntAct" id="Q96C23">
    <property type="interactions" value="12"/>
</dbReference>
<dbReference type="STRING" id="9606.ENSP00000272252"/>
<dbReference type="GlyGen" id="Q96C23">
    <property type="glycosylation" value="1 site, 1 O-linked glycan (1 site)"/>
</dbReference>
<dbReference type="iPTMnet" id="Q96C23"/>
<dbReference type="PhosphoSitePlus" id="Q96C23"/>
<dbReference type="BioMuta" id="GALM"/>
<dbReference type="DMDM" id="67463772"/>
<dbReference type="jPOST" id="Q96C23"/>
<dbReference type="MassIVE" id="Q96C23"/>
<dbReference type="PaxDb" id="9606-ENSP00000272252"/>
<dbReference type="PeptideAtlas" id="Q96C23"/>
<dbReference type="ProteomicsDB" id="76151"/>
<dbReference type="Pumba" id="Q96C23"/>
<dbReference type="Antibodypedia" id="29513">
    <property type="antibodies" value="217 antibodies from 26 providers"/>
</dbReference>
<dbReference type="DNASU" id="130589"/>
<dbReference type="Ensembl" id="ENST00000272252.10">
    <property type="protein sequence ID" value="ENSP00000272252.5"/>
    <property type="gene ID" value="ENSG00000143891.17"/>
</dbReference>
<dbReference type="GeneID" id="130589"/>
<dbReference type="KEGG" id="hsa:130589"/>
<dbReference type="MANE-Select" id="ENST00000272252.10">
    <property type="protein sequence ID" value="ENSP00000272252.5"/>
    <property type="RefSeq nucleotide sequence ID" value="NM_138801.3"/>
    <property type="RefSeq protein sequence ID" value="NP_620156.1"/>
</dbReference>
<dbReference type="UCSC" id="uc002rqy.4">
    <property type="organism name" value="human"/>
</dbReference>
<dbReference type="AGR" id="HGNC:24063"/>
<dbReference type="CTD" id="130589"/>
<dbReference type="DisGeNET" id="130589"/>
<dbReference type="GeneCards" id="GALM"/>
<dbReference type="HGNC" id="HGNC:24063">
    <property type="gene designation" value="GALM"/>
</dbReference>
<dbReference type="HPA" id="ENSG00000143891">
    <property type="expression patterns" value="Tissue enhanced (adrenal gland, kidney)"/>
</dbReference>
<dbReference type="MalaCards" id="GALM"/>
<dbReference type="MIM" id="137030">
    <property type="type" value="gene"/>
</dbReference>
<dbReference type="MIM" id="618881">
    <property type="type" value="phenotype"/>
</dbReference>
<dbReference type="neXtProt" id="NX_Q96C23"/>
<dbReference type="OpenTargets" id="ENSG00000143891"/>
<dbReference type="Orphanet" id="570422">
    <property type="disease" value="Galactose mutarotase deficiency"/>
</dbReference>
<dbReference type="PharmGKB" id="PA134980075"/>
<dbReference type="VEuPathDB" id="HostDB:ENSG00000143891"/>
<dbReference type="eggNOG" id="KOG1604">
    <property type="taxonomic scope" value="Eukaryota"/>
</dbReference>
<dbReference type="GeneTree" id="ENSGT00510000047589"/>
<dbReference type="HOGENOM" id="CLU_031753_2_0_1"/>
<dbReference type="InParanoid" id="Q96C23"/>
<dbReference type="OMA" id="IYHHISR"/>
<dbReference type="OrthoDB" id="274691at2759"/>
<dbReference type="PAN-GO" id="Q96C23">
    <property type="GO annotations" value="3 GO annotations based on evolutionary models"/>
</dbReference>
<dbReference type="PhylomeDB" id="Q96C23"/>
<dbReference type="TreeFam" id="TF324207"/>
<dbReference type="BioCyc" id="MetaCyc:HS07125-MONOMER"/>
<dbReference type="BRENDA" id="5.1.3.3">
    <property type="organism ID" value="2681"/>
</dbReference>
<dbReference type="PathwayCommons" id="Q96C23"/>
<dbReference type="SABIO-RK" id="Q96C23"/>
<dbReference type="SignaLink" id="Q96C23"/>
<dbReference type="UniPathway" id="UPA00214"/>
<dbReference type="UniPathway" id="UPA00242"/>
<dbReference type="BioGRID-ORCS" id="130589">
    <property type="hits" value="12 hits in 1158 CRISPR screens"/>
</dbReference>
<dbReference type="ChiTaRS" id="GALM">
    <property type="organism name" value="human"/>
</dbReference>
<dbReference type="EvolutionaryTrace" id="Q96C23"/>
<dbReference type="GeneWiki" id="Galactose_mutarotase"/>
<dbReference type="GenomeRNAi" id="130589"/>
<dbReference type="Pharos" id="Q96C23">
    <property type="development level" value="Tbio"/>
</dbReference>
<dbReference type="PRO" id="PR:Q96C23"/>
<dbReference type="Proteomes" id="UP000005640">
    <property type="component" value="Chromosome 2"/>
</dbReference>
<dbReference type="RNAct" id="Q96C23">
    <property type="molecule type" value="protein"/>
</dbReference>
<dbReference type="Bgee" id="ENSG00000143891">
    <property type="expression patterns" value="Expressed in kidney epithelium and 189 other cell types or tissues"/>
</dbReference>
<dbReference type="ExpressionAtlas" id="Q96C23">
    <property type="expression patterns" value="baseline and differential"/>
</dbReference>
<dbReference type="GO" id="GO:0005737">
    <property type="term" value="C:cytoplasm"/>
    <property type="evidence" value="ECO:0007669"/>
    <property type="project" value="UniProtKB-SubCell"/>
</dbReference>
<dbReference type="GO" id="GO:0070062">
    <property type="term" value="C:extracellular exosome"/>
    <property type="evidence" value="ECO:0007005"/>
    <property type="project" value="UniProtKB"/>
</dbReference>
<dbReference type="GO" id="GO:0004034">
    <property type="term" value="F:aldose 1-epimerase activity"/>
    <property type="evidence" value="ECO:0000314"/>
    <property type="project" value="UniProtKB"/>
</dbReference>
<dbReference type="GO" id="GO:0030246">
    <property type="term" value="F:carbohydrate binding"/>
    <property type="evidence" value="ECO:0007669"/>
    <property type="project" value="InterPro"/>
</dbReference>
<dbReference type="GO" id="GO:0005975">
    <property type="term" value="P:carbohydrate metabolic process"/>
    <property type="evidence" value="ECO:0000314"/>
    <property type="project" value="MGI"/>
</dbReference>
<dbReference type="GO" id="GO:0033499">
    <property type="term" value="P:galactose catabolic process via UDP-galactose, Leloir pathway"/>
    <property type="evidence" value="ECO:0000314"/>
    <property type="project" value="MGI"/>
</dbReference>
<dbReference type="GO" id="GO:0006012">
    <property type="term" value="P:galactose metabolic process"/>
    <property type="evidence" value="ECO:0000314"/>
    <property type="project" value="UniProtKB"/>
</dbReference>
<dbReference type="GO" id="GO:0006006">
    <property type="term" value="P:glucose metabolic process"/>
    <property type="evidence" value="ECO:0000314"/>
    <property type="project" value="UniProtKB"/>
</dbReference>
<dbReference type="CDD" id="cd09019">
    <property type="entry name" value="galactose_mutarotase_like"/>
    <property type="match status" value="1"/>
</dbReference>
<dbReference type="FunFam" id="2.70.98.10:FF:000003">
    <property type="entry name" value="Aldose 1-epimerase"/>
    <property type="match status" value="1"/>
</dbReference>
<dbReference type="Gene3D" id="2.70.98.10">
    <property type="match status" value="1"/>
</dbReference>
<dbReference type="InterPro" id="IPR018052">
    <property type="entry name" value="Ald1_epimerase_CS"/>
</dbReference>
<dbReference type="InterPro" id="IPR015443">
    <property type="entry name" value="Aldose_1-epimerase"/>
</dbReference>
<dbReference type="InterPro" id="IPR008183">
    <property type="entry name" value="Aldose_1/G6P_1-epimerase"/>
</dbReference>
<dbReference type="InterPro" id="IPR011013">
    <property type="entry name" value="Gal_mutarotase_sf_dom"/>
</dbReference>
<dbReference type="InterPro" id="IPR047215">
    <property type="entry name" value="Galactose_mutarotase-like"/>
</dbReference>
<dbReference type="InterPro" id="IPR014718">
    <property type="entry name" value="GH-type_carb-bd"/>
</dbReference>
<dbReference type="NCBIfam" id="NF008277">
    <property type="entry name" value="PRK11055.1"/>
    <property type="match status" value="1"/>
</dbReference>
<dbReference type="PANTHER" id="PTHR10091">
    <property type="entry name" value="ALDOSE-1-EPIMERASE"/>
    <property type="match status" value="1"/>
</dbReference>
<dbReference type="PANTHER" id="PTHR10091:SF0">
    <property type="entry name" value="GALACTOSE MUTAROTASE"/>
    <property type="match status" value="1"/>
</dbReference>
<dbReference type="Pfam" id="PF01263">
    <property type="entry name" value="Aldose_epim"/>
    <property type="match status" value="1"/>
</dbReference>
<dbReference type="PIRSF" id="PIRSF005096">
    <property type="entry name" value="GALM"/>
    <property type="match status" value="1"/>
</dbReference>
<dbReference type="SUPFAM" id="SSF74650">
    <property type="entry name" value="Galactose mutarotase-like"/>
    <property type="match status" value="1"/>
</dbReference>
<dbReference type="PROSITE" id="PS00545">
    <property type="entry name" value="ALDOSE_1_EPIMERASE"/>
    <property type="match status" value="1"/>
</dbReference>
<protein>
    <recommendedName>
        <fullName evidence="5 6">Galactose mutarotase</fullName>
        <ecNumber evidence="2">5.1.3.3</ecNumber>
    </recommendedName>
    <alternativeName>
        <fullName evidence="5">Aldose 1-epimerase</fullName>
    </alternativeName>
</protein>
<reference key="1">
    <citation type="submission" date="2001-11" db="EMBL/GenBank/DDBJ databases">
        <title>Physical/genetic map of the 2p22-2p21 region on chromosome 2.</title>
        <authorList>
            <person name="Gorry M.C."/>
            <person name="Zhang Y."/>
            <person name="Marks J.J."/>
            <person name="Suppes B."/>
            <person name="Hart P.S."/>
            <person name="Cortelli J.R."/>
            <person name="Pallos D."/>
            <person name="Hart T.C."/>
        </authorList>
    </citation>
    <scope>NUCLEOTIDE SEQUENCE [GENOMIC DNA]</scope>
</reference>
<reference key="2">
    <citation type="submission" date="2008-06" db="EMBL/GenBank/DDBJ databases">
        <authorList>
            <person name="Li J.Y."/>
            <person name="Wang H.Y."/>
            <person name="Liu F.J."/>
            <person name="Liu J."/>
        </authorList>
    </citation>
    <scope>NUCLEOTIDE SEQUENCE [MRNA]</scope>
</reference>
<reference key="3">
    <citation type="journal article" date="2004" name="Nat. Genet.">
        <title>Complete sequencing and characterization of 21,243 full-length human cDNAs.</title>
        <authorList>
            <person name="Ota T."/>
            <person name="Suzuki Y."/>
            <person name="Nishikawa T."/>
            <person name="Otsuki T."/>
            <person name="Sugiyama T."/>
            <person name="Irie R."/>
            <person name="Wakamatsu A."/>
            <person name="Hayashi K."/>
            <person name="Sato H."/>
            <person name="Nagai K."/>
            <person name="Kimura K."/>
            <person name="Makita H."/>
            <person name="Sekine M."/>
            <person name="Obayashi M."/>
            <person name="Nishi T."/>
            <person name="Shibahara T."/>
            <person name="Tanaka T."/>
            <person name="Ishii S."/>
            <person name="Yamamoto J."/>
            <person name="Saito K."/>
            <person name="Kawai Y."/>
            <person name="Isono Y."/>
            <person name="Nakamura Y."/>
            <person name="Nagahari K."/>
            <person name="Murakami K."/>
            <person name="Yasuda T."/>
            <person name="Iwayanagi T."/>
            <person name="Wagatsuma M."/>
            <person name="Shiratori A."/>
            <person name="Sudo H."/>
            <person name="Hosoiri T."/>
            <person name="Kaku Y."/>
            <person name="Kodaira H."/>
            <person name="Kondo H."/>
            <person name="Sugawara M."/>
            <person name="Takahashi M."/>
            <person name="Kanda K."/>
            <person name="Yokoi T."/>
            <person name="Furuya T."/>
            <person name="Kikkawa E."/>
            <person name="Omura Y."/>
            <person name="Abe K."/>
            <person name="Kamihara K."/>
            <person name="Katsuta N."/>
            <person name="Sato K."/>
            <person name="Tanikawa M."/>
            <person name="Yamazaki M."/>
            <person name="Ninomiya K."/>
            <person name="Ishibashi T."/>
            <person name="Yamashita H."/>
            <person name="Murakawa K."/>
            <person name="Fujimori K."/>
            <person name="Tanai H."/>
            <person name="Kimata M."/>
            <person name="Watanabe M."/>
            <person name="Hiraoka S."/>
            <person name="Chiba Y."/>
            <person name="Ishida S."/>
            <person name="Ono Y."/>
            <person name="Takiguchi S."/>
            <person name="Watanabe S."/>
            <person name="Yosida M."/>
            <person name="Hotuta T."/>
            <person name="Kusano J."/>
            <person name="Kanehori K."/>
            <person name="Takahashi-Fujii A."/>
            <person name="Hara H."/>
            <person name="Tanase T.-O."/>
            <person name="Nomura Y."/>
            <person name="Togiya S."/>
            <person name="Komai F."/>
            <person name="Hara R."/>
            <person name="Takeuchi K."/>
            <person name="Arita M."/>
            <person name="Imose N."/>
            <person name="Musashino K."/>
            <person name="Yuuki H."/>
            <person name="Oshima A."/>
            <person name="Sasaki N."/>
            <person name="Aotsuka S."/>
            <person name="Yoshikawa Y."/>
            <person name="Matsunawa H."/>
            <person name="Ichihara T."/>
            <person name="Shiohata N."/>
            <person name="Sano S."/>
            <person name="Moriya S."/>
            <person name="Momiyama H."/>
            <person name="Satoh N."/>
            <person name="Takami S."/>
            <person name="Terashima Y."/>
            <person name="Suzuki O."/>
            <person name="Nakagawa S."/>
            <person name="Senoh A."/>
            <person name="Mizoguchi H."/>
            <person name="Goto Y."/>
            <person name="Shimizu F."/>
            <person name="Wakebe H."/>
            <person name="Hishigaki H."/>
            <person name="Watanabe T."/>
            <person name="Sugiyama A."/>
            <person name="Takemoto M."/>
            <person name="Kawakami B."/>
            <person name="Yamazaki M."/>
            <person name="Watanabe K."/>
            <person name="Kumagai A."/>
            <person name="Itakura S."/>
            <person name="Fukuzumi Y."/>
            <person name="Fujimori Y."/>
            <person name="Komiyama M."/>
            <person name="Tashiro H."/>
            <person name="Tanigami A."/>
            <person name="Fujiwara T."/>
            <person name="Ono T."/>
            <person name="Yamada K."/>
            <person name="Fujii Y."/>
            <person name="Ozaki K."/>
            <person name="Hirao M."/>
            <person name="Ohmori Y."/>
            <person name="Kawabata A."/>
            <person name="Hikiji T."/>
            <person name="Kobatake N."/>
            <person name="Inagaki H."/>
            <person name="Ikema Y."/>
            <person name="Okamoto S."/>
            <person name="Okitani R."/>
            <person name="Kawakami T."/>
            <person name="Noguchi S."/>
            <person name="Itoh T."/>
            <person name="Shigeta K."/>
            <person name="Senba T."/>
            <person name="Matsumura K."/>
            <person name="Nakajima Y."/>
            <person name="Mizuno T."/>
            <person name="Morinaga M."/>
            <person name="Sasaki M."/>
            <person name="Togashi T."/>
            <person name="Oyama M."/>
            <person name="Hata H."/>
            <person name="Watanabe M."/>
            <person name="Komatsu T."/>
            <person name="Mizushima-Sugano J."/>
            <person name="Satoh T."/>
            <person name="Shirai Y."/>
            <person name="Takahashi Y."/>
            <person name="Nakagawa K."/>
            <person name="Okumura K."/>
            <person name="Nagase T."/>
            <person name="Nomura N."/>
            <person name="Kikuchi H."/>
            <person name="Masuho Y."/>
            <person name="Yamashita R."/>
            <person name="Nakai K."/>
            <person name="Yada T."/>
            <person name="Nakamura Y."/>
            <person name="Ohara O."/>
            <person name="Isogai T."/>
            <person name="Sugano S."/>
        </authorList>
    </citation>
    <scope>NUCLEOTIDE SEQUENCE [LARGE SCALE MRNA]</scope>
    <source>
        <tissue>Ovary</tissue>
    </source>
</reference>
<reference key="4">
    <citation type="journal article" date="2005" name="Nature">
        <title>Generation and annotation of the DNA sequences of human chromosomes 2 and 4.</title>
        <authorList>
            <person name="Hillier L.W."/>
            <person name="Graves T.A."/>
            <person name="Fulton R.S."/>
            <person name="Fulton L.A."/>
            <person name="Pepin K.H."/>
            <person name="Minx P."/>
            <person name="Wagner-McPherson C."/>
            <person name="Layman D."/>
            <person name="Wylie K."/>
            <person name="Sekhon M."/>
            <person name="Becker M.C."/>
            <person name="Fewell G.A."/>
            <person name="Delehaunty K.D."/>
            <person name="Miner T.L."/>
            <person name="Nash W.E."/>
            <person name="Kremitzki C."/>
            <person name="Oddy L."/>
            <person name="Du H."/>
            <person name="Sun H."/>
            <person name="Bradshaw-Cordum H."/>
            <person name="Ali J."/>
            <person name="Carter J."/>
            <person name="Cordes M."/>
            <person name="Harris A."/>
            <person name="Isak A."/>
            <person name="van Brunt A."/>
            <person name="Nguyen C."/>
            <person name="Du F."/>
            <person name="Courtney L."/>
            <person name="Kalicki J."/>
            <person name="Ozersky P."/>
            <person name="Abbott S."/>
            <person name="Armstrong J."/>
            <person name="Belter E.A."/>
            <person name="Caruso L."/>
            <person name="Cedroni M."/>
            <person name="Cotton M."/>
            <person name="Davidson T."/>
            <person name="Desai A."/>
            <person name="Elliott G."/>
            <person name="Erb T."/>
            <person name="Fronick C."/>
            <person name="Gaige T."/>
            <person name="Haakenson W."/>
            <person name="Haglund K."/>
            <person name="Holmes A."/>
            <person name="Harkins R."/>
            <person name="Kim K."/>
            <person name="Kruchowski S.S."/>
            <person name="Strong C.M."/>
            <person name="Grewal N."/>
            <person name="Goyea E."/>
            <person name="Hou S."/>
            <person name="Levy A."/>
            <person name="Martinka S."/>
            <person name="Mead K."/>
            <person name="McLellan M.D."/>
            <person name="Meyer R."/>
            <person name="Randall-Maher J."/>
            <person name="Tomlinson C."/>
            <person name="Dauphin-Kohlberg S."/>
            <person name="Kozlowicz-Reilly A."/>
            <person name="Shah N."/>
            <person name="Swearengen-Shahid S."/>
            <person name="Snider J."/>
            <person name="Strong J.T."/>
            <person name="Thompson J."/>
            <person name="Yoakum M."/>
            <person name="Leonard S."/>
            <person name="Pearman C."/>
            <person name="Trani L."/>
            <person name="Radionenko M."/>
            <person name="Waligorski J.E."/>
            <person name="Wang C."/>
            <person name="Rock S.M."/>
            <person name="Tin-Wollam A.-M."/>
            <person name="Maupin R."/>
            <person name="Latreille P."/>
            <person name="Wendl M.C."/>
            <person name="Yang S.-P."/>
            <person name="Pohl C."/>
            <person name="Wallis J.W."/>
            <person name="Spieth J."/>
            <person name="Bieri T.A."/>
            <person name="Berkowicz N."/>
            <person name="Nelson J.O."/>
            <person name="Osborne J."/>
            <person name="Ding L."/>
            <person name="Meyer R."/>
            <person name="Sabo A."/>
            <person name="Shotland Y."/>
            <person name="Sinha P."/>
            <person name="Wohldmann P.E."/>
            <person name="Cook L.L."/>
            <person name="Hickenbotham M.T."/>
            <person name="Eldred J."/>
            <person name="Williams D."/>
            <person name="Jones T.A."/>
            <person name="She X."/>
            <person name="Ciccarelli F.D."/>
            <person name="Izaurralde E."/>
            <person name="Taylor J."/>
            <person name="Schmutz J."/>
            <person name="Myers R.M."/>
            <person name="Cox D.R."/>
            <person name="Huang X."/>
            <person name="McPherson J.D."/>
            <person name="Mardis E.R."/>
            <person name="Clifton S.W."/>
            <person name="Warren W.C."/>
            <person name="Chinwalla A.T."/>
            <person name="Eddy S.R."/>
            <person name="Marra M.A."/>
            <person name="Ovcharenko I."/>
            <person name="Furey T.S."/>
            <person name="Miller W."/>
            <person name="Eichler E.E."/>
            <person name="Bork P."/>
            <person name="Suyama M."/>
            <person name="Torrents D."/>
            <person name="Waterston R.H."/>
            <person name="Wilson R.K."/>
        </authorList>
    </citation>
    <scope>NUCLEOTIDE SEQUENCE [LARGE SCALE GENOMIC DNA]</scope>
</reference>
<reference key="5">
    <citation type="submission" date="2005-09" db="EMBL/GenBank/DDBJ databases">
        <authorList>
            <person name="Mural R.J."/>
            <person name="Istrail S."/>
            <person name="Sutton G."/>
            <person name="Florea L."/>
            <person name="Halpern A.L."/>
            <person name="Mobarry C.M."/>
            <person name="Lippert R."/>
            <person name="Walenz B."/>
            <person name="Shatkay H."/>
            <person name="Dew I."/>
            <person name="Miller J.R."/>
            <person name="Flanigan M.J."/>
            <person name="Edwards N.J."/>
            <person name="Bolanos R."/>
            <person name="Fasulo D."/>
            <person name="Halldorsson B.V."/>
            <person name="Hannenhalli S."/>
            <person name="Turner R."/>
            <person name="Yooseph S."/>
            <person name="Lu F."/>
            <person name="Nusskern D.R."/>
            <person name="Shue B.C."/>
            <person name="Zheng X.H."/>
            <person name="Zhong F."/>
            <person name="Delcher A.L."/>
            <person name="Huson D.H."/>
            <person name="Kravitz S.A."/>
            <person name="Mouchard L."/>
            <person name="Reinert K."/>
            <person name="Remington K.A."/>
            <person name="Clark A.G."/>
            <person name="Waterman M.S."/>
            <person name="Eichler E.E."/>
            <person name="Adams M.D."/>
            <person name="Hunkapiller M.W."/>
            <person name="Myers E.W."/>
            <person name="Venter J.C."/>
        </authorList>
    </citation>
    <scope>NUCLEOTIDE SEQUENCE [LARGE SCALE GENOMIC DNA]</scope>
</reference>
<reference key="6">
    <citation type="journal article" date="2004" name="Genome Res.">
        <title>The status, quality, and expansion of the NIH full-length cDNA project: the Mammalian Gene Collection (MGC).</title>
        <authorList>
            <consortium name="The MGC Project Team"/>
        </authorList>
    </citation>
    <scope>NUCLEOTIDE SEQUENCE [LARGE SCALE MRNA]</scope>
    <source>
        <tissue>Brain</tissue>
        <tissue>Skin</tissue>
    </source>
</reference>
<reference key="7">
    <citation type="journal article" date="2003" name="FEBS Lett.">
        <title>Identification and characterisation of human aldose 1-epimerase.</title>
        <authorList>
            <person name="Timson D.J."/>
            <person name="Reece R.J."/>
        </authorList>
    </citation>
    <scope>FUNCTION</scope>
    <scope>MUTAGENESIS OF HIS-107; HIS-176 AND GLU-307</scope>
    <scope>CATALYTIC ACTIVITY</scope>
    <scope>BIOPHYSICOCHEMICAL PROPERTIES</scope>
    <scope>SUBUNIT</scope>
    <scope>SUBSTRATE SPECIFICITY</scope>
</reference>
<reference key="8">
    <citation type="journal article" date="2009" name="Anal. Chem.">
        <title>Lys-N and trypsin cover complementary parts of the phosphoproteome in a refined SCX-based approach.</title>
        <authorList>
            <person name="Gauci S."/>
            <person name="Helbig A.O."/>
            <person name="Slijper M."/>
            <person name="Krijgsveld J."/>
            <person name="Heck A.J."/>
            <person name="Mohammed S."/>
        </authorList>
    </citation>
    <scope>ACETYLATION [LARGE SCALE ANALYSIS] AT ALA-2</scope>
    <scope>CLEAVAGE OF INITIATOR METHIONINE [LARGE SCALE ANALYSIS]</scope>
    <scope>IDENTIFICATION BY MASS SPECTROMETRY [LARGE SCALE ANALYSIS]</scope>
</reference>
<reference key="9">
    <citation type="journal article" date="2011" name="BMC Syst. Biol.">
        <title>Initial characterization of the human central proteome.</title>
        <authorList>
            <person name="Burkard T.R."/>
            <person name="Planyavsky M."/>
            <person name="Kaupe I."/>
            <person name="Breitwieser F.P."/>
            <person name="Buerckstuemmer T."/>
            <person name="Bennett K.L."/>
            <person name="Superti-Furga G."/>
            <person name="Colinge J."/>
        </authorList>
    </citation>
    <scope>IDENTIFICATION BY MASS SPECTROMETRY [LARGE SCALE ANALYSIS]</scope>
</reference>
<reference key="10">
    <citation type="journal article" date="2013" name="J. Proteome Res.">
        <title>Toward a comprehensive characterization of a human cancer cell phosphoproteome.</title>
        <authorList>
            <person name="Zhou H."/>
            <person name="Di Palma S."/>
            <person name="Preisinger C."/>
            <person name="Peng M."/>
            <person name="Polat A.N."/>
            <person name="Heck A.J."/>
            <person name="Mohammed S."/>
        </authorList>
    </citation>
    <scope>PHOSPHORYLATION [LARGE SCALE ANALYSIS] AT SER-14</scope>
    <scope>IDENTIFICATION BY MASS SPECTROMETRY [LARGE SCALE ANALYSIS]</scope>
    <source>
        <tissue>Erythroleukemia</tissue>
    </source>
</reference>
<reference key="11">
    <citation type="journal article" date="2014" name="J. Proteomics">
        <title>An enzyme assisted RP-RPLC approach for in-depth analysis of human liver phosphoproteome.</title>
        <authorList>
            <person name="Bian Y."/>
            <person name="Song C."/>
            <person name="Cheng K."/>
            <person name="Dong M."/>
            <person name="Wang F."/>
            <person name="Huang J."/>
            <person name="Sun D."/>
            <person name="Wang L."/>
            <person name="Ye M."/>
            <person name="Zou H."/>
        </authorList>
    </citation>
    <scope>IDENTIFICATION BY MASS SPECTROMETRY [LARGE SCALE ANALYSIS]</scope>
    <source>
        <tissue>Liver</tissue>
    </source>
</reference>
<reference evidence="11 12" key="12">
    <citation type="journal article" date="2004" name="J. Biol. Chem.">
        <title>Molecular structure of human galactose mutarotase.</title>
        <authorList>
            <person name="Thoden J.B."/>
            <person name="Timson D.J."/>
            <person name="Reece R.J."/>
            <person name="Holden H.M."/>
        </authorList>
    </citation>
    <scope>X-RAY CRYSTALLOGRAPHY (2.2 ANGSTROMS) IN COMPLEX WITH BETA-D-GALACTOSE</scope>
    <scope>ACTIVE SITE</scope>
    <scope>SUBUNIT</scope>
</reference>
<reference key="13">
    <citation type="journal article" date="2019" name="Genet. Med.">
        <title>Biallelic GALM pathogenic variants cause a novel type of galactosemia.</title>
        <authorList>
            <person name="Wada Y."/>
            <person name="Kikuchi A."/>
            <person name="Arai-Ichinoi N."/>
            <person name="Sakamoto O."/>
            <person name="Takezawa Y."/>
            <person name="Iwasawa S."/>
            <person name="Niihori T."/>
            <person name="Nyuzuki H."/>
            <person name="Nakajima Y."/>
            <person name="Ogawa E."/>
            <person name="Ishige M."/>
            <person name="Hirai H."/>
            <person name="Sasai H."/>
            <person name="Fujiki R."/>
            <person name="Shirota M."/>
            <person name="Funayama R."/>
            <person name="Yamamoto M."/>
            <person name="Ito T."/>
            <person name="Ohara O."/>
            <person name="Nakayama K."/>
            <person name="Aoki Y."/>
            <person name="Koshiba S."/>
            <person name="Fukao T."/>
            <person name="Kure S."/>
        </authorList>
    </citation>
    <scope>VARIANTS GALAC4 82-ARG--ALA-342 DEL; ARG-142; GLY-267 AND 311-TRP--ALA-342 DEL</scope>
    <scope>CHARACTERIZATION OF VARIANTS GALAC4 82-ARG--ALA-342 DEL; ARG-142; GLY-267 AND 311-TRP--ALA-342 DEL</scope>
    <scope>FUNCTION</scope>
    <scope>INVOLVEMENT IN GALAC4</scope>
</reference>
<organism>
    <name type="scientific">Homo sapiens</name>
    <name type="common">Human</name>
    <dbReference type="NCBI Taxonomy" id="9606"/>
    <lineage>
        <taxon>Eukaryota</taxon>
        <taxon>Metazoa</taxon>
        <taxon>Chordata</taxon>
        <taxon>Craniata</taxon>
        <taxon>Vertebrata</taxon>
        <taxon>Euteleostomi</taxon>
        <taxon>Mammalia</taxon>
        <taxon>Eutheria</taxon>
        <taxon>Euarchontoglires</taxon>
        <taxon>Primates</taxon>
        <taxon>Haplorrhini</taxon>
        <taxon>Catarrhini</taxon>
        <taxon>Hominidae</taxon>
        <taxon>Homo</taxon>
    </lineage>
</organism>
<gene>
    <name evidence="10" type="primary">GALM</name>
    <name type="ORF">BLOCK25</name>
</gene>